<name>PANB_GEOMG</name>
<proteinExistence type="inferred from homology"/>
<dbReference type="EC" id="2.1.2.11" evidence="1"/>
<dbReference type="EMBL" id="CP000148">
    <property type="protein sequence ID" value="ABB31873.1"/>
    <property type="molecule type" value="Genomic_DNA"/>
</dbReference>
<dbReference type="RefSeq" id="WP_004511422.1">
    <property type="nucleotide sequence ID" value="NC_007517.1"/>
</dbReference>
<dbReference type="SMR" id="Q39V51"/>
<dbReference type="STRING" id="269799.Gmet_1642"/>
<dbReference type="KEGG" id="gme:Gmet_1642"/>
<dbReference type="eggNOG" id="COG0413">
    <property type="taxonomic scope" value="Bacteria"/>
</dbReference>
<dbReference type="HOGENOM" id="CLU_036645_1_0_7"/>
<dbReference type="UniPathway" id="UPA00028">
    <property type="reaction ID" value="UER00003"/>
</dbReference>
<dbReference type="Proteomes" id="UP000007073">
    <property type="component" value="Chromosome"/>
</dbReference>
<dbReference type="GO" id="GO:0005737">
    <property type="term" value="C:cytoplasm"/>
    <property type="evidence" value="ECO:0007669"/>
    <property type="project" value="UniProtKB-SubCell"/>
</dbReference>
<dbReference type="GO" id="GO:0003864">
    <property type="term" value="F:3-methyl-2-oxobutanoate hydroxymethyltransferase activity"/>
    <property type="evidence" value="ECO:0007669"/>
    <property type="project" value="UniProtKB-UniRule"/>
</dbReference>
<dbReference type="GO" id="GO:0000287">
    <property type="term" value="F:magnesium ion binding"/>
    <property type="evidence" value="ECO:0007669"/>
    <property type="project" value="TreeGrafter"/>
</dbReference>
<dbReference type="GO" id="GO:0015940">
    <property type="term" value="P:pantothenate biosynthetic process"/>
    <property type="evidence" value="ECO:0007669"/>
    <property type="project" value="UniProtKB-UniRule"/>
</dbReference>
<dbReference type="CDD" id="cd06557">
    <property type="entry name" value="KPHMT-like"/>
    <property type="match status" value="1"/>
</dbReference>
<dbReference type="FunFam" id="3.20.20.60:FF:000003">
    <property type="entry name" value="3-methyl-2-oxobutanoate hydroxymethyltransferase"/>
    <property type="match status" value="1"/>
</dbReference>
<dbReference type="Gene3D" id="3.20.20.60">
    <property type="entry name" value="Phosphoenolpyruvate-binding domains"/>
    <property type="match status" value="1"/>
</dbReference>
<dbReference type="HAMAP" id="MF_00156">
    <property type="entry name" value="PanB"/>
    <property type="match status" value="1"/>
</dbReference>
<dbReference type="InterPro" id="IPR003700">
    <property type="entry name" value="Pantoate_hydroxy_MeTrfase"/>
</dbReference>
<dbReference type="InterPro" id="IPR015813">
    <property type="entry name" value="Pyrv/PenolPyrv_kinase-like_dom"/>
</dbReference>
<dbReference type="InterPro" id="IPR040442">
    <property type="entry name" value="Pyrv_kinase-like_dom_sf"/>
</dbReference>
<dbReference type="NCBIfam" id="TIGR00222">
    <property type="entry name" value="panB"/>
    <property type="match status" value="1"/>
</dbReference>
<dbReference type="NCBIfam" id="NF001452">
    <property type="entry name" value="PRK00311.1"/>
    <property type="match status" value="1"/>
</dbReference>
<dbReference type="PANTHER" id="PTHR20881">
    <property type="entry name" value="3-METHYL-2-OXOBUTANOATE HYDROXYMETHYLTRANSFERASE"/>
    <property type="match status" value="1"/>
</dbReference>
<dbReference type="PANTHER" id="PTHR20881:SF0">
    <property type="entry name" value="3-METHYL-2-OXOBUTANOATE HYDROXYMETHYLTRANSFERASE"/>
    <property type="match status" value="1"/>
</dbReference>
<dbReference type="Pfam" id="PF02548">
    <property type="entry name" value="Pantoate_transf"/>
    <property type="match status" value="1"/>
</dbReference>
<dbReference type="PIRSF" id="PIRSF000388">
    <property type="entry name" value="Pantoate_hydroxy_MeTrfase"/>
    <property type="match status" value="1"/>
</dbReference>
<dbReference type="SUPFAM" id="SSF51621">
    <property type="entry name" value="Phosphoenolpyruvate/pyruvate domain"/>
    <property type="match status" value="1"/>
</dbReference>
<accession>Q39V51</accession>
<protein>
    <recommendedName>
        <fullName evidence="1">3-methyl-2-oxobutanoate hydroxymethyltransferase</fullName>
        <ecNumber evidence="1">2.1.2.11</ecNumber>
    </recommendedName>
    <alternativeName>
        <fullName evidence="1">Ketopantoate hydroxymethyltransferase</fullName>
        <shortName evidence="1">KPHMT</shortName>
    </alternativeName>
</protein>
<keyword id="KW-0963">Cytoplasm</keyword>
<keyword id="KW-0460">Magnesium</keyword>
<keyword id="KW-0479">Metal-binding</keyword>
<keyword id="KW-0566">Pantothenate biosynthesis</keyword>
<keyword id="KW-1185">Reference proteome</keyword>
<keyword id="KW-0808">Transferase</keyword>
<evidence type="ECO:0000255" key="1">
    <source>
        <dbReference type="HAMAP-Rule" id="MF_00156"/>
    </source>
</evidence>
<organism>
    <name type="scientific">Geobacter metallireducens (strain ATCC 53774 / DSM 7210 / GS-15)</name>
    <dbReference type="NCBI Taxonomy" id="269799"/>
    <lineage>
        <taxon>Bacteria</taxon>
        <taxon>Pseudomonadati</taxon>
        <taxon>Thermodesulfobacteriota</taxon>
        <taxon>Desulfuromonadia</taxon>
        <taxon>Geobacterales</taxon>
        <taxon>Geobacteraceae</taxon>
        <taxon>Geobacter</taxon>
    </lineage>
</organism>
<gene>
    <name evidence="1" type="primary">panB</name>
    <name type="ordered locus">Gmet_1642</name>
</gene>
<feature type="chain" id="PRO_0000297275" description="3-methyl-2-oxobutanoate hydroxymethyltransferase">
    <location>
        <begin position="1"/>
        <end position="267"/>
    </location>
</feature>
<feature type="active site" description="Proton acceptor" evidence="1">
    <location>
        <position position="184"/>
    </location>
</feature>
<feature type="binding site" evidence="1">
    <location>
        <begin position="46"/>
        <end position="47"/>
    </location>
    <ligand>
        <name>3-methyl-2-oxobutanoate</name>
        <dbReference type="ChEBI" id="CHEBI:11851"/>
    </ligand>
</feature>
<feature type="binding site" evidence="1">
    <location>
        <position position="46"/>
    </location>
    <ligand>
        <name>Mg(2+)</name>
        <dbReference type="ChEBI" id="CHEBI:18420"/>
    </ligand>
</feature>
<feature type="binding site" evidence="1">
    <location>
        <position position="85"/>
    </location>
    <ligand>
        <name>3-methyl-2-oxobutanoate</name>
        <dbReference type="ChEBI" id="CHEBI:11851"/>
    </ligand>
</feature>
<feature type="binding site" evidence="1">
    <location>
        <position position="85"/>
    </location>
    <ligand>
        <name>Mg(2+)</name>
        <dbReference type="ChEBI" id="CHEBI:18420"/>
    </ligand>
</feature>
<feature type="binding site" evidence="1">
    <location>
        <position position="115"/>
    </location>
    <ligand>
        <name>3-methyl-2-oxobutanoate</name>
        <dbReference type="ChEBI" id="CHEBI:11851"/>
    </ligand>
</feature>
<feature type="binding site" evidence="1">
    <location>
        <position position="117"/>
    </location>
    <ligand>
        <name>Mg(2+)</name>
        <dbReference type="ChEBI" id="CHEBI:18420"/>
    </ligand>
</feature>
<reference key="1">
    <citation type="journal article" date="2009" name="BMC Microbiol.">
        <title>The genome sequence of Geobacter metallireducens: features of metabolism, physiology and regulation common and dissimilar to Geobacter sulfurreducens.</title>
        <authorList>
            <person name="Aklujkar M."/>
            <person name="Krushkal J."/>
            <person name="DiBartolo G."/>
            <person name="Lapidus A."/>
            <person name="Land M.L."/>
            <person name="Lovley D.R."/>
        </authorList>
    </citation>
    <scope>NUCLEOTIDE SEQUENCE [LARGE SCALE GENOMIC DNA]</scope>
    <source>
        <strain>ATCC 53774 / DSM 7210 / GS-15</strain>
    </source>
</reference>
<sequence>MNRKKTIIDIQKMKAAGEKITVLTSYDYPFTRVMDECGIDMILIGDSVGVVFSGYDNTLPVTMDEMIYHTRAVVRARPKALVVADMPFLSYQTDLRDARLNAGRLVKDGGAEAVKLEGGSHVADTIRAIVDMDIPVMAHIGLTPQSIHRMGGYKVQGKKEEQSQRLLDDAKAIEEAGAFAVVLEGIPLKLAEKITEELSIPTIGIGAGPHCDGQVLVIHDILGLCEKYSPKFVKRYGDANALITSAVSSYIAEVKKGEFPDEGHSFS</sequence>
<comment type="function">
    <text evidence="1">Catalyzes the reversible reaction in which hydroxymethyl group from 5,10-methylenetetrahydrofolate is transferred onto alpha-ketoisovalerate to form ketopantoate.</text>
</comment>
<comment type="catalytic activity">
    <reaction evidence="1">
        <text>3-methyl-2-oxobutanoate + (6R)-5,10-methylene-5,6,7,8-tetrahydrofolate + H2O = 2-dehydropantoate + (6S)-5,6,7,8-tetrahydrofolate</text>
        <dbReference type="Rhea" id="RHEA:11824"/>
        <dbReference type="ChEBI" id="CHEBI:11561"/>
        <dbReference type="ChEBI" id="CHEBI:11851"/>
        <dbReference type="ChEBI" id="CHEBI:15377"/>
        <dbReference type="ChEBI" id="CHEBI:15636"/>
        <dbReference type="ChEBI" id="CHEBI:57453"/>
        <dbReference type="EC" id="2.1.2.11"/>
    </reaction>
</comment>
<comment type="cofactor">
    <cofactor evidence="1">
        <name>Mg(2+)</name>
        <dbReference type="ChEBI" id="CHEBI:18420"/>
    </cofactor>
    <text evidence="1">Binds 1 Mg(2+) ion per subunit.</text>
</comment>
<comment type="pathway">
    <text evidence="1">Cofactor biosynthesis; (R)-pantothenate biosynthesis; (R)-pantoate from 3-methyl-2-oxobutanoate: step 1/2.</text>
</comment>
<comment type="subunit">
    <text evidence="1">Homodecamer; pentamer of dimers.</text>
</comment>
<comment type="subcellular location">
    <subcellularLocation>
        <location evidence="1">Cytoplasm</location>
    </subcellularLocation>
</comment>
<comment type="similarity">
    <text evidence="1">Belongs to the PanB family.</text>
</comment>